<evidence type="ECO:0000250" key="1"/>
<evidence type="ECO:0000255" key="2"/>
<evidence type="ECO:0000255" key="3">
    <source>
        <dbReference type="PROSITE-ProRule" id="PRU01240"/>
    </source>
</evidence>
<evidence type="ECO:0000305" key="4"/>
<reference key="1">
    <citation type="submission" date="2003-10" db="EMBL/GenBank/DDBJ databases">
        <title>Subtilisin-like proteases gene family in Dermatophytes.</title>
        <authorList>
            <person name="Jousson O."/>
            <person name="Monod M."/>
        </authorList>
    </citation>
    <scope>NUCLEOTIDE SEQUENCE [GENOMIC DNA]</scope>
</reference>
<accession>Q5VJ74</accession>
<keyword id="KW-0325">Glycoprotein</keyword>
<keyword id="KW-0378">Hydrolase</keyword>
<keyword id="KW-0645">Protease</keyword>
<keyword id="KW-0964">Secreted</keyword>
<keyword id="KW-0720">Serine protease</keyword>
<keyword id="KW-0732">Signal</keyword>
<keyword id="KW-0843">Virulence</keyword>
<keyword id="KW-0865">Zymogen</keyword>
<comment type="function">
    <text evidence="1">Secreted subtilisin-like serine protease with keratinolytic activity that contributes to pathogenicity.</text>
</comment>
<comment type="subcellular location">
    <subcellularLocation>
        <location evidence="1">Secreted</location>
    </subcellularLocation>
</comment>
<comment type="similarity">
    <text evidence="4">Belongs to the peptidase S8 family.</text>
</comment>
<gene>
    <name type="primary">SUB4</name>
</gene>
<sequence>MVCLKTLSVFLAAFAAADARAVFKTQGHKNSEMIPDNYIVVMKDGVSQDDFKAHISSVASIHSTNKAKRGTNTQGMKREFDIMNWRGYHGHFDRDTLEEILNDSKVDYVEQDQVVRISGLVTQRSAPSWGLGRVSHRQAGSRDYVFDDSAGRGVTIYGVDTGIDINHQDFRGRARWGTNTADRDNADRHGHGTHTASTFAGTAYGIAKNANIVAVKVLGSDGSGSTSGIIAGINYCVQDAQQRGILGKAAMNLSLGGGFSQANNDAVTRAQNAGIFVAVAAGNDNRDARNYSPASAPAVCTVASSTINDSKSSFSNWGPVVDIYAPGSDIIAARPGGGSTTMSGTSMASPHVAGMGAYMIGMGADPRQVCDRLKQLATAAIRNPGSSTTNRLLYNGSGQ</sequence>
<protein>
    <recommendedName>
        <fullName>Subtilisin-like protease 4</fullName>
        <ecNumber>3.4.21.-</ecNumber>
    </recommendedName>
</protein>
<dbReference type="EC" id="3.4.21.-"/>
<dbReference type="EMBL" id="AY439108">
    <property type="protein sequence ID" value="AAS45676.1"/>
    <property type="molecule type" value="Genomic_DNA"/>
</dbReference>
<dbReference type="SMR" id="Q5VJ74"/>
<dbReference type="MEROPS" id="S08.115"/>
<dbReference type="GlyCosmos" id="Q5VJ74">
    <property type="glycosylation" value="4 sites, No reported glycans"/>
</dbReference>
<dbReference type="GO" id="GO:0005576">
    <property type="term" value="C:extracellular region"/>
    <property type="evidence" value="ECO:0007669"/>
    <property type="project" value="UniProtKB-SubCell"/>
</dbReference>
<dbReference type="GO" id="GO:0004252">
    <property type="term" value="F:serine-type endopeptidase activity"/>
    <property type="evidence" value="ECO:0007669"/>
    <property type="project" value="InterPro"/>
</dbReference>
<dbReference type="GO" id="GO:0006508">
    <property type="term" value="P:proteolysis"/>
    <property type="evidence" value="ECO:0007669"/>
    <property type="project" value="UniProtKB-KW"/>
</dbReference>
<dbReference type="CDD" id="cd04077">
    <property type="entry name" value="Peptidases_S8_PCSK9_ProteinaseK_like"/>
    <property type="match status" value="1"/>
</dbReference>
<dbReference type="FunFam" id="3.40.50.200:FF:000014">
    <property type="entry name" value="Proteinase K"/>
    <property type="match status" value="1"/>
</dbReference>
<dbReference type="Gene3D" id="3.30.70.80">
    <property type="entry name" value="Peptidase S8 propeptide/proteinase inhibitor I9"/>
    <property type="match status" value="1"/>
</dbReference>
<dbReference type="Gene3D" id="3.40.50.200">
    <property type="entry name" value="Peptidase S8/S53 domain"/>
    <property type="match status" value="1"/>
</dbReference>
<dbReference type="InterPro" id="IPR034193">
    <property type="entry name" value="PCSK9_ProteinaseK-like"/>
</dbReference>
<dbReference type="InterPro" id="IPR000209">
    <property type="entry name" value="Peptidase_S8/S53_dom"/>
</dbReference>
<dbReference type="InterPro" id="IPR036852">
    <property type="entry name" value="Peptidase_S8/S53_dom_sf"/>
</dbReference>
<dbReference type="InterPro" id="IPR023828">
    <property type="entry name" value="Peptidase_S8_Ser-AS"/>
</dbReference>
<dbReference type="InterPro" id="IPR050131">
    <property type="entry name" value="Peptidase_S8_subtilisin-like"/>
</dbReference>
<dbReference type="InterPro" id="IPR015500">
    <property type="entry name" value="Peptidase_S8_subtilisin-rel"/>
</dbReference>
<dbReference type="InterPro" id="IPR010259">
    <property type="entry name" value="S8pro/Inhibitor_I9"/>
</dbReference>
<dbReference type="InterPro" id="IPR037045">
    <property type="entry name" value="S8pro/Inhibitor_I9_sf"/>
</dbReference>
<dbReference type="PANTHER" id="PTHR43806:SF11">
    <property type="entry name" value="CEREVISIN-RELATED"/>
    <property type="match status" value="1"/>
</dbReference>
<dbReference type="PANTHER" id="PTHR43806">
    <property type="entry name" value="PEPTIDASE S8"/>
    <property type="match status" value="1"/>
</dbReference>
<dbReference type="Pfam" id="PF05922">
    <property type="entry name" value="Inhibitor_I9"/>
    <property type="match status" value="1"/>
</dbReference>
<dbReference type="Pfam" id="PF00082">
    <property type="entry name" value="Peptidase_S8"/>
    <property type="match status" value="1"/>
</dbReference>
<dbReference type="PRINTS" id="PR00723">
    <property type="entry name" value="SUBTILISIN"/>
</dbReference>
<dbReference type="SUPFAM" id="SSF54897">
    <property type="entry name" value="Protease propeptides/inhibitors"/>
    <property type="match status" value="1"/>
</dbReference>
<dbReference type="SUPFAM" id="SSF52743">
    <property type="entry name" value="Subtilisin-like"/>
    <property type="match status" value="1"/>
</dbReference>
<dbReference type="PROSITE" id="PS51892">
    <property type="entry name" value="SUBTILASE"/>
    <property type="match status" value="1"/>
</dbReference>
<dbReference type="PROSITE" id="PS00138">
    <property type="entry name" value="SUBTILASE_SER"/>
    <property type="match status" value="1"/>
</dbReference>
<feature type="signal peptide" evidence="2">
    <location>
        <begin position="1"/>
        <end position="19"/>
    </location>
</feature>
<feature type="propeptide" id="PRO_0000380794" evidence="1">
    <location>
        <begin position="20"/>
        <end position="118"/>
    </location>
</feature>
<feature type="chain" id="PRO_0000380795" description="Subtilisin-like protease 4">
    <location>
        <begin position="119"/>
        <end position="399"/>
    </location>
</feature>
<feature type="domain" description="Inhibitor I9" evidence="2">
    <location>
        <begin position="38"/>
        <end position="117"/>
    </location>
</feature>
<feature type="domain" description="Peptidase S8" evidence="3">
    <location>
        <begin position="128"/>
        <end position="399"/>
    </location>
</feature>
<feature type="active site" description="Charge relay system" evidence="3">
    <location>
        <position position="160"/>
    </location>
</feature>
<feature type="active site" description="Charge relay system" evidence="3">
    <location>
        <position position="191"/>
    </location>
</feature>
<feature type="active site" description="Charge relay system" evidence="3">
    <location>
        <position position="346"/>
    </location>
</feature>
<feature type="glycosylation site" description="N-linked (GlcNAc...) asparagine" evidence="2">
    <location>
        <position position="102"/>
    </location>
</feature>
<feature type="glycosylation site" description="N-linked (GlcNAc...) asparagine" evidence="2">
    <location>
        <position position="252"/>
    </location>
</feature>
<feature type="glycosylation site" description="N-linked (GlcNAc...) asparagine" evidence="2">
    <location>
        <position position="308"/>
    </location>
</feature>
<feature type="glycosylation site" description="N-linked (GlcNAc...) asparagine" evidence="2">
    <location>
        <position position="395"/>
    </location>
</feature>
<organism>
    <name type="scientific">Trichophyton verrucosum</name>
    <name type="common">Cattle ringworm fungus</name>
    <dbReference type="NCBI Taxonomy" id="63417"/>
    <lineage>
        <taxon>Eukaryota</taxon>
        <taxon>Fungi</taxon>
        <taxon>Dikarya</taxon>
        <taxon>Ascomycota</taxon>
        <taxon>Pezizomycotina</taxon>
        <taxon>Eurotiomycetes</taxon>
        <taxon>Eurotiomycetidae</taxon>
        <taxon>Onygenales</taxon>
        <taxon>Arthrodermataceae</taxon>
        <taxon>Trichophyton</taxon>
    </lineage>
</organism>
<proteinExistence type="inferred from homology"/>
<name>SUB4_TRIVC</name>